<gene>
    <name evidence="1" type="primary">kdpA</name>
    <name type="ordered locus">BA_0739</name>
    <name type="ordered locus">GBAA_0739</name>
    <name type="ordered locus">BAS0703</name>
</gene>
<keyword id="KW-1003">Cell membrane</keyword>
<keyword id="KW-0406">Ion transport</keyword>
<keyword id="KW-0472">Membrane</keyword>
<keyword id="KW-0630">Potassium</keyword>
<keyword id="KW-0633">Potassium transport</keyword>
<keyword id="KW-1185">Reference proteome</keyword>
<keyword id="KW-0812">Transmembrane</keyword>
<keyword id="KW-1133">Transmembrane helix</keyword>
<keyword id="KW-0813">Transport</keyword>
<sequence length="555" mass="59761">MIWVAVVITMLLFILVAKPTGIYLEKAFQGSKKLDKVFGPFEKLIFKITGVKEYNQTWKQYALSLVLLNGFMIVVVYFIFRLQGVLPLNPAHIEGMEPTLAFNTAISFMADTNLQHYSGENGLSYLSQLIGITFLMFAAPATTLALVMAFIRGLAGKELGNFFIDFTRALTRVFLPIAFMAALVFVALGVPQTLDGAVTAQTIDGAKQSILRGPVASFVAIKELGNNGGGFFGANSTHPFENPGQMSNILQMMLMMLLPTALPFTYGRMVGNKKQGRILFVSLFMVFLLGFITITTSELNGNPALNAMGIEHVQGSTEGKEVRFGTVFSSLYATVTTAAETGAVNTMHDTLTPIGGLVPLVNMMLNTVYGGVGAGFVNIIMYAIIAVFISGLMVGRTPEFLGKKIEGKEMKLIAVTILFHPLLILGFSALALSTSLGTDAISHSGFHGLTQVVYEYTSSAANNGSGFEGLGDNTPFWNITTGLVMFLGRYFSLITMLAVAASLKEKTVVPETVGTFRTDNGLFGGIFIGTIVIVGALTFFPMLVLGPIAEFLTLK</sequence>
<evidence type="ECO:0000255" key="1">
    <source>
        <dbReference type="HAMAP-Rule" id="MF_00275"/>
    </source>
</evidence>
<feature type="chain" id="PRO_0000166477" description="Potassium-transporting ATPase potassium-binding subunit">
    <location>
        <begin position="1"/>
        <end position="555"/>
    </location>
</feature>
<feature type="transmembrane region" description="Helical" evidence="1">
    <location>
        <begin position="2"/>
        <end position="22"/>
    </location>
</feature>
<feature type="transmembrane region" description="Helical" evidence="1">
    <location>
        <begin position="60"/>
        <end position="80"/>
    </location>
</feature>
<feature type="transmembrane region" description="Helical" evidence="1">
    <location>
        <begin position="130"/>
        <end position="150"/>
    </location>
</feature>
<feature type="transmembrane region" description="Helical" evidence="1">
    <location>
        <begin position="173"/>
        <end position="193"/>
    </location>
</feature>
<feature type="transmembrane region" description="Helical" evidence="1">
    <location>
        <begin position="246"/>
        <end position="266"/>
    </location>
</feature>
<feature type="transmembrane region" description="Helical" evidence="1">
    <location>
        <begin position="278"/>
        <end position="298"/>
    </location>
</feature>
<feature type="transmembrane region" description="Helical" evidence="1">
    <location>
        <begin position="374"/>
        <end position="394"/>
    </location>
</feature>
<feature type="transmembrane region" description="Helical" evidence="1">
    <location>
        <begin position="412"/>
        <end position="432"/>
    </location>
</feature>
<feature type="transmembrane region" description="Helical" evidence="1">
    <location>
        <begin position="483"/>
        <end position="503"/>
    </location>
</feature>
<feature type="transmembrane region" description="Helical" evidence="1">
    <location>
        <begin position="525"/>
        <end position="545"/>
    </location>
</feature>
<proteinExistence type="inferred from homology"/>
<comment type="function">
    <text evidence="1">Part of the high-affinity ATP-driven potassium transport (or Kdp) system, which catalyzes the hydrolysis of ATP coupled with the electrogenic transport of potassium into the cytoplasm. This subunit binds the extracellular potassium ions and delivers the ions to the membrane domain of KdpB through an intramembrane tunnel.</text>
</comment>
<comment type="subunit">
    <text evidence="1">The system is composed of three essential subunits: KdpA, KdpB and KdpC.</text>
</comment>
<comment type="subcellular location">
    <subcellularLocation>
        <location evidence="1">Cell membrane</location>
        <topology evidence="1">Multi-pass membrane protein</topology>
    </subcellularLocation>
</comment>
<comment type="similarity">
    <text evidence="1">Belongs to the KdpA family.</text>
</comment>
<reference key="1">
    <citation type="journal article" date="2003" name="Nature">
        <title>The genome sequence of Bacillus anthracis Ames and comparison to closely related bacteria.</title>
        <authorList>
            <person name="Read T.D."/>
            <person name="Peterson S.N."/>
            <person name="Tourasse N.J."/>
            <person name="Baillie L.W."/>
            <person name="Paulsen I.T."/>
            <person name="Nelson K.E."/>
            <person name="Tettelin H."/>
            <person name="Fouts D.E."/>
            <person name="Eisen J.A."/>
            <person name="Gill S.R."/>
            <person name="Holtzapple E.K."/>
            <person name="Okstad O.A."/>
            <person name="Helgason E."/>
            <person name="Rilstone J."/>
            <person name="Wu M."/>
            <person name="Kolonay J.F."/>
            <person name="Beanan M.J."/>
            <person name="Dodson R.J."/>
            <person name="Brinkac L.M."/>
            <person name="Gwinn M.L."/>
            <person name="DeBoy R.T."/>
            <person name="Madpu R."/>
            <person name="Daugherty S.C."/>
            <person name="Durkin A.S."/>
            <person name="Haft D.H."/>
            <person name="Nelson W.C."/>
            <person name="Peterson J.D."/>
            <person name="Pop M."/>
            <person name="Khouri H.M."/>
            <person name="Radune D."/>
            <person name="Benton J.L."/>
            <person name="Mahamoud Y."/>
            <person name="Jiang L."/>
            <person name="Hance I.R."/>
            <person name="Weidman J.F."/>
            <person name="Berry K.J."/>
            <person name="Plaut R.D."/>
            <person name="Wolf A.M."/>
            <person name="Watkins K.L."/>
            <person name="Nierman W.C."/>
            <person name="Hazen A."/>
            <person name="Cline R.T."/>
            <person name="Redmond C."/>
            <person name="Thwaite J.E."/>
            <person name="White O."/>
            <person name="Salzberg S.L."/>
            <person name="Thomason B."/>
            <person name="Friedlander A.M."/>
            <person name="Koehler T.M."/>
            <person name="Hanna P.C."/>
            <person name="Kolstoe A.-B."/>
            <person name="Fraser C.M."/>
        </authorList>
    </citation>
    <scope>NUCLEOTIDE SEQUENCE [LARGE SCALE GENOMIC DNA]</scope>
    <source>
        <strain>Ames / isolate Porton</strain>
    </source>
</reference>
<reference key="2">
    <citation type="journal article" date="2009" name="J. Bacteriol.">
        <title>The complete genome sequence of Bacillus anthracis Ames 'Ancestor'.</title>
        <authorList>
            <person name="Ravel J."/>
            <person name="Jiang L."/>
            <person name="Stanley S.T."/>
            <person name="Wilson M.R."/>
            <person name="Decker R.S."/>
            <person name="Read T.D."/>
            <person name="Worsham P."/>
            <person name="Keim P.S."/>
            <person name="Salzberg S.L."/>
            <person name="Fraser-Liggett C.M."/>
            <person name="Rasko D.A."/>
        </authorList>
    </citation>
    <scope>NUCLEOTIDE SEQUENCE [LARGE SCALE GENOMIC DNA]</scope>
    <source>
        <strain>Ames ancestor</strain>
    </source>
</reference>
<reference key="3">
    <citation type="submission" date="2004-01" db="EMBL/GenBank/DDBJ databases">
        <title>Complete genome sequence of Bacillus anthracis Sterne.</title>
        <authorList>
            <person name="Brettin T.S."/>
            <person name="Bruce D."/>
            <person name="Challacombe J.F."/>
            <person name="Gilna P."/>
            <person name="Han C."/>
            <person name="Hill K."/>
            <person name="Hitchcock P."/>
            <person name="Jackson P."/>
            <person name="Keim P."/>
            <person name="Longmire J."/>
            <person name="Lucas S."/>
            <person name="Okinaka R."/>
            <person name="Richardson P."/>
            <person name="Rubin E."/>
            <person name="Tice H."/>
        </authorList>
    </citation>
    <scope>NUCLEOTIDE SEQUENCE [LARGE SCALE GENOMIC DNA]</scope>
    <source>
        <strain>Sterne</strain>
    </source>
</reference>
<name>KDPA_BACAN</name>
<organism>
    <name type="scientific">Bacillus anthracis</name>
    <dbReference type="NCBI Taxonomy" id="1392"/>
    <lineage>
        <taxon>Bacteria</taxon>
        <taxon>Bacillati</taxon>
        <taxon>Bacillota</taxon>
        <taxon>Bacilli</taxon>
        <taxon>Bacillales</taxon>
        <taxon>Bacillaceae</taxon>
        <taxon>Bacillus</taxon>
        <taxon>Bacillus cereus group</taxon>
    </lineage>
</organism>
<dbReference type="EMBL" id="AE016879">
    <property type="protein sequence ID" value="AAP24750.1"/>
    <property type="molecule type" value="Genomic_DNA"/>
</dbReference>
<dbReference type="EMBL" id="AE017334">
    <property type="protein sequence ID" value="AAT29846.1"/>
    <property type="molecule type" value="Genomic_DNA"/>
</dbReference>
<dbReference type="EMBL" id="AE017225">
    <property type="protein sequence ID" value="AAT53030.1"/>
    <property type="molecule type" value="Genomic_DNA"/>
</dbReference>
<dbReference type="RefSeq" id="NP_843264.1">
    <property type="nucleotide sequence ID" value="NC_003997.3"/>
</dbReference>
<dbReference type="RefSeq" id="WP_000638344.1">
    <property type="nucleotide sequence ID" value="NZ_WXXJ01000017.1"/>
</dbReference>
<dbReference type="RefSeq" id="YP_026979.1">
    <property type="nucleotide sequence ID" value="NC_005945.1"/>
</dbReference>
<dbReference type="SMR" id="Q81UW7"/>
<dbReference type="STRING" id="261594.GBAA_0739"/>
<dbReference type="DNASU" id="1088341"/>
<dbReference type="GeneID" id="45020818"/>
<dbReference type="KEGG" id="ban:BA_0739"/>
<dbReference type="KEGG" id="banh:HYU01_04070"/>
<dbReference type="KEGG" id="bar:GBAA_0739"/>
<dbReference type="KEGG" id="bat:BAS0703"/>
<dbReference type="PATRIC" id="fig|198094.11.peg.739"/>
<dbReference type="eggNOG" id="COG2060">
    <property type="taxonomic scope" value="Bacteria"/>
</dbReference>
<dbReference type="HOGENOM" id="CLU_018614_3_0_9"/>
<dbReference type="OMA" id="WQNYGGE"/>
<dbReference type="OrthoDB" id="9763796at2"/>
<dbReference type="Proteomes" id="UP000000427">
    <property type="component" value="Chromosome"/>
</dbReference>
<dbReference type="Proteomes" id="UP000000594">
    <property type="component" value="Chromosome"/>
</dbReference>
<dbReference type="GO" id="GO:0005886">
    <property type="term" value="C:plasma membrane"/>
    <property type="evidence" value="ECO:0007669"/>
    <property type="project" value="UniProtKB-SubCell"/>
</dbReference>
<dbReference type="GO" id="GO:0008556">
    <property type="term" value="F:P-type potassium transmembrane transporter activity"/>
    <property type="evidence" value="ECO:0007669"/>
    <property type="project" value="InterPro"/>
</dbReference>
<dbReference type="GO" id="GO:0030955">
    <property type="term" value="F:potassium ion binding"/>
    <property type="evidence" value="ECO:0007669"/>
    <property type="project" value="UniProtKB-UniRule"/>
</dbReference>
<dbReference type="HAMAP" id="MF_00275">
    <property type="entry name" value="KdpA"/>
    <property type="match status" value="1"/>
</dbReference>
<dbReference type="InterPro" id="IPR004623">
    <property type="entry name" value="KdpA"/>
</dbReference>
<dbReference type="NCBIfam" id="TIGR00680">
    <property type="entry name" value="kdpA"/>
    <property type="match status" value="1"/>
</dbReference>
<dbReference type="PANTHER" id="PTHR30607">
    <property type="entry name" value="POTASSIUM-TRANSPORTING ATPASE A CHAIN"/>
    <property type="match status" value="1"/>
</dbReference>
<dbReference type="PANTHER" id="PTHR30607:SF2">
    <property type="entry name" value="POTASSIUM-TRANSPORTING ATPASE POTASSIUM-BINDING SUBUNIT"/>
    <property type="match status" value="1"/>
</dbReference>
<dbReference type="Pfam" id="PF03814">
    <property type="entry name" value="KdpA"/>
    <property type="match status" value="1"/>
</dbReference>
<dbReference type="PIRSF" id="PIRSF001294">
    <property type="entry name" value="K_ATPaseA"/>
    <property type="match status" value="1"/>
</dbReference>
<accession>Q81UW7</accession>
<accession>Q6I351</accession>
<accession>Q6KWW9</accession>
<protein>
    <recommendedName>
        <fullName evidence="1">Potassium-transporting ATPase potassium-binding subunit</fullName>
    </recommendedName>
    <alternativeName>
        <fullName evidence="1">ATP phosphohydrolase [potassium-transporting] A chain</fullName>
    </alternativeName>
    <alternativeName>
        <fullName evidence="1">Potassium-binding and translocating subunit A</fullName>
    </alternativeName>
    <alternativeName>
        <fullName evidence="1">Potassium-translocating ATPase A chain</fullName>
    </alternativeName>
</protein>